<sequence length="255" mass="27838">MSDDNSVTKVAAFYQFAALPDYRELREPLRAFCAGLALKGSVLLAQEGINGTIAGAPDAIDAFAHELAHGTMFGGRLDNLELKFSTAEAMPFGRLKVRLKKEIVTLGDAAADPTRQVGTYVDAAAWNALIAAPDTLVLDTRNAFEVAMGTFEGAVDPGIKSFGQFKDFAAERLDPAKHRRIAMFCTGGIRCEKASAHLLARGFAEVYHLKGGILKYLEEVPEAQSRWRGECFVFDERVALGHGLRERDKDATRDQ</sequence>
<feature type="chain" id="PRO_0000161451" description="tRNA uridine(34) hydroxylase">
    <location>
        <begin position="1"/>
        <end position="255"/>
    </location>
</feature>
<feature type="domain" description="Rhodanese" evidence="1">
    <location>
        <begin position="131"/>
        <end position="225"/>
    </location>
</feature>
<feature type="active site" description="Cysteine persulfide intermediate" evidence="1">
    <location>
        <position position="185"/>
    </location>
</feature>
<dbReference type="EC" id="1.14.-.-" evidence="1"/>
<dbReference type="EMBL" id="BA000040">
    <property type="protein sequence ID" value="BAC47668.1"/>
    <property type="molecule type" value="Genomic_DNA"/>
</dbReference>
<dbReference type="RefSeq" id="NP_769043.1">
    <property type="nucleotide sequence ID" value="NC_004463.1"/>
</dbReference>
<dbReference type="RefSeq" id="WP_011085190.1">
    <property type="nucleotide sequence ID" value="NC_004463.1"/>
</dbReference>
<dbReference type="SMR" id="Q89SJ7"/>
<dbReference type="FunCoup" id="Q89SJ7">
    <property type="interactions" value="348"/>
</dbReference>
<dbReference type="STRING" id="224911.AAV28_08920"/>
<dbReference type="EnsemblBacteria" id="BAC47668">
    <property type="protein sequence ID" value="BAC47668"/>
    <property type="gene ID" value="BAC47668"/>
</dbReference>
<dbReference type="GeneID" id="46489442"/>
<dbReference type="KEGG" id="bja:bll2403"/>
<dbReference type="PATRIC" id="fig|224911.44.peg.1963"/>
<dbReference type="eggNOG" id="COG1054">
    <property type="taxonomic scope" value="Bacteria"/>
</dbReference>
<dbReference type="HOGENOM" id="CLU_038878_0_1_5"/>
<dbReference type="InParanoid" id="Q89SJ7"/>
<dbReference type="OrthoDB" id="9778326at2"/>
<dbReference type="PhylomeDB" id="Q89SJ7"/>
<dbReference type="Proteomes" id="UP000002526">
    <property type="component" value="Chromosome"/>
</dbReference>
<dbReference type="GO" id="GO:0016705">
    <property type="term" value="F:oxidoreductase activity, acting on paired donors, with incorporation or reduction of molecular oxygen"/>
    <property type="evidence" value="ECO:0007669"/>
    <property type="project" value="UniProtKB-UniRule"/>
</dbReference>
<dbReference type="GO" id="GO:0006400">
    <property type="term" value="P:tRNA modification"/>
    <property type="evidence" value="ECO:0007669"/>
    <property type="project" value="UniProtKB-UniRule"/>
</dbReference>
<dbReference type="CDD" id="cd01518">
    <property type="entry name" value="RHOD_YceA"/>
    <property type="match status" value="1"/>
</dbReference>
<dbReference type="Gene3D" id="3.30.70.100">
    <property type="match status" value="1"/>
</dbReference>
<dbReference type="Gene3D" id="3.40.250.10">
    <property type="entry name" value="Rhodanese-like domain"/>
    <property type="match status" value="1"/>
</dbReference>
<dbReference type="HAMAP" id="MF_00469">
    <property type="entry name" value="TrhO"/>
    <property type="match status" value="1"/>
</dbReference>
<dbReference type="InterPro" id="IPR001763">
    <property type="entry name" value="Rhodanese-like_dom"/>
</dbReference>
<dbReference type="InterPro" id="IPR036873">
    <property type="entry name" value="Rhodanese-like_dom_sf"/>
</dbReference>
<dbReference type="InterPro" id="IPR020936">
    <property type="entry name" value="TrhO"/>
</dbReference>
<dbReference type="InterPro" id="IPR040503">
    <property type="entry name" value="TRHO_N"/>
</dbReference>
<dbReference type="NCBIfam" id="NF001136">
    <property type="entry name" value="PRK00142.1-4"/>
    <property type="match status" value="1"/>
</dbReference>
<dbReference type="PANTHER" id="PTHR43268:SF3">
    <property type="entry name" value="RHODANESE-LIKE DOMAIN-CONTAINING PROTEIN 7-RELATED"/>
    <property type="match status" value="1"/>
</dbReference>
<dbReference type="PANTHER" id="PTHR43268">
    <property type="entry name" value="THIOSULFATE SULFURTRANSFERASE/RHODANESE-LIKE DOMAIN-CONTAINING PROTEIN 2"/>
    <property type="match status" value="1"/>
</dbReference>
<dbReference type="Pfam" id="PF00581">
    <property type="entry name" value="Rhodanese"/>
    <property type="match status" value="1"/>
</dbReference>
<dbReference type="Pfam" id="PF17773">
    <property type="entry name" value="UPF0176_N"/>
    <property type="match status" value="1"/>
</dbReference>
<dbReference type="SMART" id="SM00450">
    <property type="entry name" value="RHOD"/>
    <property type="match status" value="1"/>
</dbReference>
<dbReference type="SUPFAM" id="SSF52821">
    <property type="entry name" value="Rhodanese/Cell cycle control phosphatase"/>
    <property type="match status" value="1"/>
</dbReference>
<dbReference type="PROSITE" id="PS50206">
    <property type="entry name" value="RHODANESE_3"/>
    <property type="match status" value="1"/>
</dbReference>
<evidence type="ECO:0000255" key="1">
    <source>
        <dbReference type="HAMAP-Rule" id="MF_00469"/>
    </source>
</evidence>
<name>TRHO_BRADU</name>
<reference key="1">
    <citation type="journal article" date="2002" name="DNA Res.">
        <title>Complete genomic sequence of nitrogen-fixing symbiotic bacterium Bradyrhizobium japonicum USDA110.</title>
        <authorList>
            <person name="Kaneko T."/>
            <person name="Nakamura Y."/>
            <person name="Sato S."/>
            <person name="Minamisawa K."/>
            <person name="Uchiumi T."/>
            <person name="Sasamoto S."/>
            <person name="Watanabe A."/>
            <person name="Idesawa K."/>
            <person name="Iriguchi M."/>
            <person name="Kawashima K."/>
            <person name="Kohara M."/>
            <person name="Matsumoto M."/>
            <person name="Shimpo S."/>
            <person name="Tsuruoka H."/>
            <person name="Wada T."/>
            <person name="Yamada M."/>
            <person name="Tabata S."/>
        </authorList>
    </citation>
    <scope>NUCLEOTIDE SEQUENCE [LARGE SCALE GENOMIC DNA]</scope>
    <source>
        <strain>JCM 10833 / BCRC 13528 / IAM 13628 / NBRC 14792 / USDA 110</strain>
    </source>
</reference>
<comment type="function">
    <text evidence="1">Catalyzes oxygen-dependent 5-hydroxyuridine (ho5U) modification at position 34 in tRNAs.</text>
</comment>
<comment type="catalytic activity">
    <reaction evidence="1">
        <text>uridine(34) in tRNA + AH2 + O2 = 5-hydroxyuridine(34) in tRNA + A + H2O</text>
        <dbReference type="Rhea" id="RHEA:64224"/>
        <dbReference type="Rhea" id="RHEA-COMP:11727"/>
        <dbReference type="Rhea" id="RHEA-COMP:13381"/>
        <dbReference type="ChEBI" id="CHEBI:13193"/>
        <dbReference type="ChEBI" id="CHEBI:15377"/>
        <dbReference type="ChEBI" id="CHEBI:15379"/>
        <dbReference type="ChEBI" id="CHEBI:17499"/>
        <dbReference type="ChEBI" id="CHEBI:65315"/>
        <dbReference type="ChEBI" id="CHEBI:136877"/>
    </reaction>
</comment>
<comment type="similarity">
    <text evidence="1">Belongs to the TrhO family.</text>
</comment>
<gene>
    <name evidence="1" type="primary">trhO</name>
    <name type="ordered locus">bll2403</name>
</gene>
<proteinExistence type="inferred from homology"/>
<keyword id="KW-0560">Oxidoreductase</keyword>
<keyword id="KW-1185">Reference proteome</keyword>
<keyword id="KW-0819">tRNA processing</keyword>
<protein>
    <recommendedName>
        <fullName evidence="1">tRNA uridine(34) hydroxylase</fullName>
        <ecNumber evidence="1">1.14.-.-</ecNumber>
    </recommendedName>
    <alternativeName>
        <fullName evidence="1">tRNA hydroxylation protein O</fullName>
    </alternativeName>
</protein>
<accession>Q89SJ7</accession>
<organism>
    <name type="scientific">Bradyrhizobium diazoefficiens (strain JCM 10833 / BCRC 13528 / IAM 13628 / NBRC 14792 / USDA 110)</name>
    <dbReference type="NCBI Taxonomy" id="224911"/>
    <lineage>
        <taxon>Bacteria</taxon>
        <taxon>Pseudomonadati</taxon>
        <taxon>Pseudomonadota</taxon>
        <taxon>Alphaproteobacteria</taxon>
        <taxon>Hyphomicrobiales</taxon>
        <taxon>Nitrobacteraceae</taxon>
        <taxon>Bradyrhizobium</taxon>
    </lineage>
</organism>